<evidence type="ECO:0000255" key="1">
    <source>
        <dbReference type="HAMAP-Rule" id="MF_01333"/>
    </source>
</evidence>
<evidence type="ECO:0000305" key="2"/>
<protein>
    <recommendedName>
        <fullName evidence="1">Large ribosomal subunit protein uL5</fullName>
    </recommendedName>
    <alternativeName>
        <fullName evidence="2">50S ribosomal protein L5</fullName>
    </alternativeName>
</protein>
<reference key="1">
    <citation type="journal article" date="2005" name="J. Bacteriol.">
        <title>Insights on evolution of virulence and resistance from the complete genome analysis of an early methicillin-resistant Staphylococcus aureus strain and a biofilm-producing methicillin-resistant Staphylococcus epidermidis strain.</title>
        <authorList>
            <person name="Gill S.R."/>
            <person name="Fouts D.E."/>
            <person name="Archer G.L."/>
            <person name="Mongodin E.F."/>
            <person name="DeBoy R.T."/>
            <person name="Ravel J."/>
            <person name="Paulsen I.T."/>
            <person name="Kolonay J.F."/>
            <person name="Brinkac L.M."/>
            <person name="Beanan M.J."/>
            <person name="Dodson R.J."/>
            <person name="Daugherty S.C."/>
            <person name="Madupu R."/>
            <person name="Angiuoli S.V."/>
            <person name="Durkin A.S."/>
            <person name="Haft D.H."/>
            <person name="Vamathevan J.J."/>
            <person name="Khouri H."/>
            <person name="Utterback T.R."/>
            <person name="Lee C."/>
            <person name="Dimitrov G."/>
            <person name="Jiang L."/>
            <person name="Qin H."/>
            <person name="Weidman J."/>
            <person name="Tran K."/>
            <person name="Kang K.H."/>
            <person name="Hance I.R."/>
            <person name="Nelson K.E."/>
            <person name="Fraser C.M."/>
        </authorList>
    </citation>
    <scope>NUCLEOTIDE SEQUENCE [LARGE SCALE GENOMIC DNA]</scope>
    <source>
        <strain>COL</strain>
    </source>
</reference>
<feature type="chain" id="PRO_0000124986" description="Large ribosomal subunit protein uL5">
    <location>
        <begin position="1"/>
        <end position="179"/>
    </location>
</feature>
<sequence>MNRLKEKFNTEVTENLMKKFNYSSVMEVPKIDKIVVNMGVGDAVQNSKVLDNAVEELELITGQKPLVTKAKKSIATFRLREGMPIGAKVTLRGERMYEFLDKLISVSLPRVRDFQGVSKKAFDGRGNYTLGVKEQLIFPEIDYDKVSKVRGMDIVIVTTANTDEEARELLANFGMPFRK</sequence>
<proteinExistence type="inferred from homology"/>
<keyword id="KW-0687">Ribonucleoprotein</keyword>
<keyword id="KW-0689">Ribosomal protein</keyword>
<keyword id="KW-0694">RNA-binding</keyword>
<keyword id="KW-0699">rRNA-binding</keyword>
<keyword id="KW-0820">tRNA-binding</keyword>
<organism>
    <name type="scientific">Staphylococcus aureus (strain COL)</name>
    <dbReference type="NCBI Taxonomy" id="93062"/>
    <lineage>
        <taxon>Bacteria</taxon>
        <taxon>Bacillati</taxon>
        <taxon>Bacillota</taxon>
        <taxon>Bacilli</taxon>
        <taxon>Bacillales</taxon>
        <taxon>Staphylococcaceae</taxon>
        <taxon>Staphylococcus</taxon>
    </lineage>
</organism>
<dbReference type="EMBL" id="CP000046">
    <property type="protein sequence ID" value="AAW37102.1"/>
    <property type="molecule type" value="Genomic_DNA"/>
</dbReference>
<dbReference type="RefSeq" id="WP_001080824.1">
    <property type="nucleotide sequence ID" value="NZ_JBGOFO010000004.1"/>
</dbReference>
<dbReference type="SMR" id="Q5HDX0"/>
<dbReference type="KEGG" id="sac:SACOL2227"/>
<dbReference type="HOGENOM" id="CLU_061015_2_1_9"/>
<dbReference type="Proteomes" id="UP000000530">
    <property type="component" value="Chromosome"/>
</dbReference>
<dbReference type="GO" id="GO:1990904">
    <property type="term" value="C:ribonucleoprotein complex"/>
    <property type="evidence" value="ECO:0007669"/>
    <property type="project" value="UniProtKB-KW"/>
</dbReference>
<dbReference type="GO" id="GO:0005840">
    <property type="term" value="C:ribosome"/>
    <property type="evidence" value="ECO:0007669"/>
    <property type="project" value="UniProtKB-KW"/>
</dbReference>
<dbReference type="GO" id="GO:0019843">
    <property type="term" value="F:rRNA binding"/>
    <property type="evidence" value="ECO:0007669"/>
    <property type="project" value="UniProtKB-UniRule"/>
</dbReference>
<dbReference type="GO" id="GO:0003735">
    <property type="term" value="F:structural constituent of ribosome"/>
    <property type="evidence" value="ECO:0007669"/>
    <property type="project" value="InterPro"/>
</dbReference>
<dbReference type="GO" id="GO:0000049">
    <property type="term" value="F:tRNA binding"/>
    <property type="evidence" value="ECO:0007669"/>
    <property type="project" value="UniProtKB-UniRule"/>
</dbReference>
<dbReference type="GO" id="GO:0006412">
    <property type="term" value="P:translation"/>
    <property type="evidence" value="ECO:0007669"/>
    <property type="project" value="UniProtKB-UniRule"/>
</dbReference>
<dbReference type="FunFam" id="3.30.1440.10:FF:000001">
    <property type="entry name" value="50S ribosomal protein L5"/>
    <property type="match status" value="1"/>
</dbReference>
<dbReference type="Gene3D" id="3.30.1440.10">
    <property type="match status" value="1"/>
</dbReference>
<dbReference type="HAMAP" id="MF_01333_B">
    <property type="entry name" value="Ribosomal_uL5_B"/>
    <property type="match status" value="1"/>
</dbReference>
<dbReference type="InterPro" id="IPR002132">
    <property type="entry name" value="Ribosomal_uL5"/>
</dbReference>
<dbReference type="InterPro" id="IPR020930">
    <property type="entry name" value="Ribosomal_uL5_bac-type"/>
</dbReference>
<dbReference type="InterPro" id="IPR031309">
    <property type="entry name" value="Ribosomal_uL5_C"/>
</dbReference>
<dbReference type="InterPro" id="IPR020929">
    <property type="entry name" value="Ribosomal_uL5_CS"/>
</dbReference>
<dbReference type="InterPro" id="IPR022803">
    <property type="entry name" value="Ribosomal_uL5_dom_sf"/>
</dbReference>
<dbReference type="InterPro" id="IPR031310">
    <property type="entry name" value="Ribosomal_uL5_N"/>
</dbReference>
<dbReference type="NCBIfam" id="NF000585">
    <property type="entry name" value="PRK00010.1"/>
    <property type="match status" value="1"/>
</dbReference>
<dbReference type="PANTHER" id="PTHR11994">
    <property type="entry name" value="60S RIBOSOMAL PROTEIN L11-RELATED"/>
    <property type="match status" value="1"/>
</dbReference>
<dbReference type="Pfam" id="PF00281">
    <property type="entry name" value="Ribosomal_L5"/>
    <property type="match status" value="1"/>
</dbReference>
<dbReference type="Pfam" id="PF00673">
    <property type="entry name" value="Ribosomal_L5_C"/>
    <property type="match status" value="1"/>
</dbReference>
<dbReference type="PIRSF" id="PIRSF002161">
    <property type="entry name" value="Ribosomal_L5"/>
    <property type="match status" value="1"/>
</dbReference>
<dbReference type="SUPFAM" id="SSF55282">
    <property type="entry name" value="RL5-like"/>
    <property type="match status" value="1"/>
</dbReference>
<dbReference type="PROSITE" id="PS00358">
    <property type="entry name" value="RIBOSOMAL_L5"/>
    <property type="match status" value="1"/>
</dbReference>
<name>RL5_STAAC</name>
<gene>
    <name evidence="1" type="primary">rplE</name>
    <name type="ordered locus">SACOL2227</name>
</gene>
<accession>Q5HDX0</accession>
<comment type="function">
    <text evidence="1">This is one of the proteins that bind and probably mediate the attachment of the 5S RNA into the large ribosomal subunit, where it forms part of the central protuberance. In the 70S ribosome it contacts protein S13 of the 30S subunit (bridge B1b), connecting the 2 subunits; this bridge is implicated in subunit movement. Contacts the P site tRNA; the 5S rRNA and some of its associated proteins might help stabilize positioning of ribosome-bound tRNAs.</text>
</comment>
<comment type="subunit">
    <text evidence="1">Part of the 50S ribosomal subunit; part of the 5S rRNA/L5/L18/L25 subcomplex. Contacts the 5S rRNA and the P site tRNA. Forms a bridge to the 30S subunit in the 70S ribosome.</text>
</comment>
<comment type="similarity">
    <text evidence="1">Belongs to the universal ribosomal protein uL5 family.</text>
</comment>